<keyword id="KW-0997">Cell inner membrane</keyword>
<keyword id="KW-1003">Cell membrane</keyword>
<keyword id="KW-0407">Ion channel</keyword>
<keyword id="KW-0406">Ion transport</keyword>
<keyword id="KW-0472">Membrane</keyword>
<keyword id="KW-0479">Metal-binding</keyword>
<keyword id="KW-1185">Reference proteome</keyword>
<keyword id="KW-0915">Sodium</keyword>
<keyword id="KW-0812">Transmembrane</keyword>
<keyword id="KW-1133">Transmembrane helix</keyword>
<keyword id="KW-0813">Transport</keyword>
<gene>
    <name evidence="1" type="primary">fluC</name>
    <name evidence="1" type="synonym">crcB</name>
    <name type="ordered locus">CV_1940</name>
</gene>
<sequence length="126" mass="13400">MWKSILAIAIGAAAGALLRWFLGLRLNSLFPSLPPGTLAANLVGGYIIGVAVALFADMPMLSPLWRLLIITGFCGGLTTFSTFSAEVVDLLRQGQLQPAFAAIAVHVSGSLLMTMAGIASWQWLRR</sequence>
<comment type="function">
    <text evidence="1">Fluoride-specific ion channel. Important for reducing fluoride concentration in the cell, thus reducing its toxicity.</text>
</comment>
<comment type="catalytic activity">
    <reaction evidence="1">
        <text>fluoride(in) = fluoride(out)</text>
        <dbReference type="Rhea" id="RHEA:76159"/>
        <dbReference type="ChEBI" id="CHEBI:17051"/>
    </reaction>
    <physiologicalReaction direction="left-to-right" evidence="1">
        <dbReference type="Rhea" id="RHEA:76160"/>
    </physiologicalReaction>
</comment>
<comment type="activity regulation">
    <text evidence="1">Na(+) is not transported, but it plays an essential structural role and its presence is essential for fluoride channel function.</text>
</comment>
<comment type="subcellular location">
    <subcellularLocation>
        <location evidence="1">Cell inner membrane</location>
        <topology evidence="1">Multi-pass membrane protein</topology>
    </subcellularLocation>
</comment>
<comment type="similarity">
    <text evidence="1">Belongs to the fluoride channel Fluc/FEX (TC 1.A.43) family.</text>
</comment>
<dbReference type="EMBL" id="AE016825">
    <property type="protein sequence ID" value="AAQ59614.2"/>
    <property type="molecule type" value="Genomic_DNA"/>
</dbReference>
<dbReference type="SMR" id="Q7NWP1"/>
<dbReference type="STRING" id="243365.CV_1940"/>
<dbReference type="KEGG" id="cvi:CV_1940"/>
<dbReference type="eggNOG" id="COG0239">
    <property type="taxonomic scope" value="Bacteria"/>
</dbReference>
<dbReference type="HOGENOM" id="CLU_114342_3_3_4"/>
<dbReference type="OrthoDB" id="9806299at2"/>
<dbReference type="Proteomes" id="UP000001424">
    <property type="component" value="Chromosome"/>
</dbReference>
<dbReference type="GO" id="GO:0005886">
    <property type="term" value="C:plasma membrane"/>
    <property type="evidence" value="ECO:0007669"/>
    <property type="project" value="UniProtKB-SubCell"/>
</dbReference>
<dbReference type="GO" id="GO:0062054">
    <property type="term" value="F:fluoride channel activity"/>
    <property type="evidence" value="ECO:0007669"/>
    <property type="project" value="UniProtKB-UniRule"/>
</dbReference>
<dbReference type="GO" id="GO:0046872">
    <property type="term" value="F:metal ion binding"/>
    <property type="evidence" value="ECO:0007669"/>
    <property type="project" value="UniProtKB-KW"/>
</dbReference>
<dbReference type="GO" id="GO:0140114">
    <property type="term" value="P:cellular detoxification of fluoride"/>
    <property type="evidence" value="ECO:0007669"/>
    <property type="project" value="UniProtKB-UniRule"/>
</dbReference>
<dbReference type="HAMAP" id="MF_00454">
    <property type="entry name" value="FluC"/>
    <property type="match status" value="1"/>
</dbReference>
<dbReference type="InterPro" id="IPR003691">
    <property type="entry name" value="FluC"/>
</dbReference>
<dbReference type="NCBIfam" id="TIGR00494">
    <property type="entry name" value="crcB"/>
    <property type="match status" value="1"/>
</dbReference>
<dbReference type="NCBIfam" id="NF010792">
    <property type="entry name" value="PRK14196.1"/>
    <property type="match status" value="1"/>
</dbReference>
<dbReference type="PANTHER" id="PTHR28259">
    <property type="entry name" value="FLUORIDE EXPORT PROTEIN 1-RELATED"/>
    <property type="match status" value="1"/>
</dbReference>
<dbReference type="PANTHER" id="PTHR28259:SF1">
    <property type="entry name" value="FLUORIDE EXPORT PROTEIN 1-RELATED"/>
    <property type="match status" value="1"/>
</dbReference>
<dbReference type="Pfam" id="PF02537">
    <property type="entry name" value="CRCB"/>
    <property type="match status" value="1"/>
</dbReference>
<name>FLUC_CHRVO</name>
<organism>
    <name type="scientific">Chromobacterium violaceum (strain ATCC 12472 / DSM 30191 / JCM 1249 / CCUG 213 / NBRC 12614 / NCIMB 9131 / NCTC 9757 / MK)</name>
    <dbReference type="NCBI Taxonomy" id="243365"/>
    <lineage>
        <taxon>Bacteria</taxon>
        <taxon>Pseudomonadati</taxon>
        <taxon>Pseudomonadota</taxon>
        <taxon>Betaproteobacteria</taxon>
        <taxon>Neisseriales</taxon>
        <taxon>Chromobacteriaceae</taxon>
        <taxon>Chromobacterium</taxon>
    </lineage>
</organism>
<reference key="1">
    <citation type="journal article" date="2003" name="Proc. Natl. Acad. Sci. U.S.A.">
        <title>The complete genome sequence of Chromobacterium violaceum reveals remarkable and exploitable bacterial adaptability.</title>
        <authorList>
            <person name="Vasconcelos A.T.R."/>
            <person name="de Almeida D.F."/>
            <person name="Hungria M."/>
            <person name="Guimaraes C.T."/>
            <person name="Antonio R.V."/>
            <person name="Almeida F.C."/>
            <person name="de Almeida L.G.P."/>
            <person name="de Almeida R."/>
            <person name="Alves-Gomes J.A."/>
            <person name="Andrade E.M."/>
            <person name="Araripe J."/>
            <person name="de Araujo M.F.F."/>
            <person name="Astolfi-Filho S."/>
            <person name="Azevedo V."/>
            <person name="Baptista A.J."/>
            <person name="Bataus L.A.M."/>
            <person name="Batista J.S."/>
            <person name="Belo A."/>
            <person name="van den Berg C."/>
            <person name="Bogo M."/>
            <person name="Bonatto S."/>
            <person name="Bordignon J."/>
            <person name="Brigido M.M."/>
            <person name="Brito C.A."/>
            <person name="Brocchi M."/>
            <person name="Burity H.A."/>
            <person name="Camargo A.A."/>
            <person name="Cardoso D.D.P."/>
            <person name="Carneiro N.P."/>
            <person name="Carraro D.M."/>
            <person name="Carvalho C.M.B."/>
            <person name="Cascardo J.C.M."/>
            <person name="Cavada B.S."/>
            <person name="Chueire L.M.O."/>
            <person name="Creczynski-Pasa T.B."/>
            <person name="Cunha-Junior N.C."/>
            <person name="Fagundes N."/>
            <person name="Falcao C.L."/>
            <person name="Fantinatti F."/>
            <person name="Farias I.P."/>
            <person name="Felipe M.S.S."/>
            <person name="Ferrari L.P."/>
            <person name="Ferro J.A."/>
            <person name="Ferro M.I.T."/>
            <person name="Franco G.R."/>
            <person name="Freitas N.S.A."/>
            <person name="Furlan L.R."/>
            <person name="Gazzinelli R.T."/>
            <person name="Gomes E.A."/>
            <person name="Goncalves P.R."/>
            <person name="Grangeiro T.B."/>
            <person name="Grattapaglia D."/>
            <person name="Grisard E.C."/>
            <person name="Hanna E.S."/>
            <person name="Jardim S.N."/>
            <person name="Laurino J."/>
            <person name="Leoi L.C.T."/>
            <person name="Lima L.F.A."/>
            <person name="Loureiro M.F."/>
            <person name="Lyra M.C.C.P."/>
            <person name="Madeira H.M.F."/>
            <person name="Manfio G.P."/>
            <person name="Maranhao A.Q."/>
            <person name="Martins W.S."/>
            <person name="di Mauro S.M.Z."/>
            <person name="de Medeiros S.R.B."/>
            <person name="Meissner R.V."/>
            <person name="Moreira M.A.M."/>
            <person name="Nascimento F.F."/>
            <person name="Nicolas M.F."/>
            <person name="Oliveira J.G."/>
            <person name="Oliveira S.C."/>
            <person name="Paixao R.F.C."/>
            <person name="Parente J.A."/>
            <person name="Pedrosa F.O."/>
            <person name="Pena S.D.J."/>
            <person name="Pereira J.O."/>
            <person name="Pereira M."/>
            <person name="Pinto L.S.R.C."/>
            <person name="Pinto L.S."/>
            <person name="Porto J.I.R."/>
            <person name="Potrich D.P."/>
            <person name="Ramalho-Neto C.E."/>
            <person name="Reis A.M.M."/>
            <person name="Rigo L.U."/>
            <person name="Rondinelli E."/>
            <person name="Santos E.B.P."/>
            <person name="Santos F.R."/>
            <person name="Schneider M.P.C."/>
            <person name="Seuanez H.N."/>
            <person name="Silva A.M.R."/>
            <person name="da Silva A.L.C."/>
            <person name="Silva D.W."/>
            <person name="Silva R."/>
            <person name="Simoes I.C."/>
            <person name="Simon D."/>
            <person name="Soares C.M.A."/>
            <person name="Soares R.B.A."/>
            <person name="Souza E.M."/>
            <person name="Souza K.R.L."/>
            <person name="Souza R.C."/>
            <person name="Steffens M.B.R."/>
            <person name="Steindel M."/>
            <person name="Teixeira S.R."/>
            <person name="Urmenyi T."/>
            <person name="Vettore A."/>
            <person name="Wassem R."/>
            <person name="Zaha A."/>
            <person name="Simpson A.J.G."/>
        </authorList>
    </citation>
    <scope>NUCLEOTIDE SEQUENCE [LARGE SCALE GENOMIC DNA]</scope>
    <source>
        <strain>ATCC 12472 / DSM 30191 / JCM 1249 / CCUG 213 / NBRC 12614 / NCIMB 9131 / NCTC 9757 / MK</strain>
    </source>
</reference>
<accession>Q7NWP1</accession>
<evidence type="ECO:0000255" key="1">
    <source>
        <dbReference type="HAMAP-Rule" id="MF_00454"/>
    </source>
</evidence>
<feature type="chain" id="PRO_0000110085" description="Fluoride-specific ion channel FluC">
    <location>
        <begin position="1"/>
        <end position="126"/>
    </location>
</feature>
<feature type="transmembrane region" description="Helical" evidence="1">
    <location>
        <begin position="4"/>
        <end position="24"/>
    </location>
</feature>
<feature type="transmembrane region" description="Helical" evidence="1">
    <location>
        <begin position="36"/>
        <end position="56"/>
    </location>
</feature>
<feature type="transmembrane region" description="Helical" evidence="1">
    <location>
        <begin position="68"/>
        <end position="88"/>
    </location>
</feature>
<feature type="transmembrane region" description="Helical" evidence="1">
    <location>
        <begin position="99"/>
        <end position="119"/>
    </location>
</feature>
<feature type="binding site" evidence="1">
    <location>
        <position position="75"/>
    </location>
    <ligand>
        <name>Na(+)</name>
        <dbReference type="ChEBI" id="CHEBI:29101"/>
        <note>structural</note>
    </ligand>
</feature>
<feature type="binding site" evidence="1">
    <location>
        <position position="78"/>
    </location>
    <ligand>
        <name>Na(+)</name>
        <dbReference type="ChEBI" id="CHEBI:29101"/>
        <note>structural</note>
    </ligand>
</feature>
<protein>
    <recommendedName>
        <fullName evidence="1">Fluoride-specific ion channel FluC</fullName>
    </recommendedName>
</protein>
<proteinExistence type="inferred from homology"/>